<evidence type="ECO:0000250" key="1"/>
<evidence type="ECO:0000269" key="2">
    <source>
    </source>
</evidence>
<evidence type="ECO:0000269" key="3">
    <source>
    </source>
</evidence>
<evidence type="ECO:0000305" key="4"/>
<evidence type="ECO:0007829" key="5">
    <source>
        <dbReference type="PDB" id="6X3B"/>
    </source>
</evidence>
<name>RMD_PSEAE</name>
<protein>
    <recommendedName>
        <fullName>GDP-6-deoxy-D-mannose reductase</fullName>
        <ecNumber>1.1.1.281</ecNumber>
    </recommendedName>
</protein>
<gene>
    <name type="primary">rmd</name>
    <name type="ordered locus">PA5454</name>
</gene>
<sequence length="304" mass="33929">MTQRLFVTGLSGFVGKHLQAYLAAAHTPWALLPVPHRYDLLEPDSLGDLWPELPDAVIHLAGQTYVPEAFRDPARTLQINLLGTLNLLQALKARGFSGTFLYISSGDVYGQVAEAALPIHEELIPHPRNPYAVSKLAAESLCLQWGITEGWRVLVARPFNHIGPGQKDSFVIASAARQIARMKQGLQANRLEVGDIDVSRDFLDVQDVLSAYLRLLSHGEAGAVYNVCSGQEQKIRELIELLADIAQVELEIVQDPARMRRAEQRRVRGSHARLHDTTGWKPEITIKQSLRAILSDWESRVREE</sequence>
<feature type="chain" id="PRO_0000419038" description="GDP-6-deoxy-D-mannose reductase">
    <location>
        <begin position="1"/>
        <end position="304"/>
    </location>
</feature>
<feature type="binding site" evidence="1">
    <location>
        <begin position="13"/>
        <end position="14"/>
    </location>
    <ligand>
        <name>NADP(+)</name>
        <dbReference type="ChEBI" id="CHEBI:58349"/>
    </ligand>
</feature>
<feature type="binding site" evidence="1">
    <location>
        <begin position="39"/>
        <end position="40"/>
    </location>
    <ligand>
        <name>NADP(+)</name>
        <dbReference type="ChEBI" id="CHEBI:58349"/>
    </ligand>
</feature>
<feature type="binding site" evidence="1">
    <location>
        <begin position="105"/>
        <end position="106"/>
    </location>
    <ligand>
        <name>substrate</name>
    </ligand>
</feature>
<feature type="binding site" evidence="1">
    <location>
        <position position="131"/>
    </location>
    <ligand>
        <name>NADP(+)</name>
        <dbReference type="ChEBI" id="CHEBI:58349"/>
    </ligand>
</feature>
<feature type="binding site" evidence="1">
    <location>
        <position position="160"/>
    </location>
    <ligand>
        <name>substrate</name>
    </ligand>
</feature>
<feature type="binding site" evidence="1">
    <location>
        <position position="200"/>
    </location>
    <ligand>
        <name>substrate</name>
    </ligand>
</feature>
<feature type="binding site" evidence="1">
    <location>
        <begin position="260"/>
        <end position="263"/>
    </location>
    <ligand>
        <name>substrate</name>
    </ligand>
</feature>
<feature type="strand" evidence="5">
    <location>
        <begin position="3"/>
        <end position="8"/>
    </location>
</feature>
<feature type="turn" evidence="5">
    <location>
        <begin position="9"/>
        <end position="11"/>
    </location>
</feature>
<feature type="helix" evidence="5">
    <location>
        <begin position="13"/>
        <end position="24"/>
    </location>
</feature>
<feature type="strand" evidence="5">
    <location>
        <begin position="28"/>
        <end position="31"/>
    </location>
</feature>
<feature type="helix" evidence="5">
    <location>
        <begin position="43"/>
        <end position="45"/>
    </location>
</feature>
<feature type="turn" evidence="5">
    <location>
        <begin position="46"/>
        <end position="48"/>
    </location>
</feature>
<feature type="strand" evidence="5">
    <location>
        <begin position="55"/>
        <end position="59"/>
    </location>
</feature>
<feature type="helix" evidence="5">
    <location>
        <begin position="66"/>
        <end position="71"/>
    </location>
</feature>
<feature type="helix" evidence="5">
    <location>
        <begin position="73"/>
        <end position="80"/>
    </location>
</feature>
<feature type="helix" evidence="5">
    <location>
        <begin position="82"/>
        <end position="94"/>
    </location>
</feature>
<feature type="strand" evidence="5">
    <location>
        <begin position="98"/>
        <end position="103"/>
    </location>
</feature>
<feature type="helix" evidence="5">
    <location>
        <begin position="106"/>
        <end position="109"/>
    </location>
</feature>
<feature type="helix" evidence="5">
    <location>
        <begin position="114"/>
        <end position="116"/>
    </location>
</feature>
<feature type="helix" evidence="5">
    <location>
        <begin position="130"/>
        <end position="149"/>
    </location>
</feature>
<feature type="strand" evidence="5">
    <location>
        <begin position="152"/>
        <end position="158"/>
    </location>
</feature>
<feature type="strand" evidence="5">
    <location>
        <begin position="160"/>
        <end position="162"/>
    </location>
</feature>
<feature type="helix" evidence="5">
    <location>
        <begin position="171"/>
        <end position="183"/>
    </location>
</feature>
<feature type="strand" evidence="5">
    <location>
        <begin position="189"/>
        <end position="194"/>
    </location>
</feature>
<feature type="strand" evidence="5">
    <location>
        <begin position="199"/>
        <end position="204"/>
    </location>
</feature>
<feature type="helix" evidence="5">
    <location>
        <begin position="205"/>
        <end position="218"/>
    </location>
</feature>
<feature type="strand" evidence="5">
    <location>
        <begin position="224"/>
        <end position="227"/>
    </location>
</feature>
<feature type="strand" evidence="5">
    <location>
        <begin position="232"/>
        <end position="234"/>
    </location>
</feature>
<feature type="helix" evidence="5">
    <location>
        <begin position="235"/>
        <end position="246"/>
    </location>
</feature>
<feature type="strand" evidence="5">
    <location>
        <begin position="251"/>
        <end position="254"/>
    </location>
</feature>
<feature type="helix" evidence="5">
    <location>
        <begin position="272"/>
        <end position="278"/>
    </location>
</feature>
<feature type="helix" evidence="5">
    <location>
        <begin position="286"/>
        <end position="300"/>
    </location>
</feature>
<comment type="function">
    <text evidence="2 3">Reductase that catalyzes the conversion of GDP-6-deoxy-D-mannose to GDP-4-dehydro-6-deoxy-D-mannose (GDP-D-rhamnose).</text>
</comment>
<comment type="catalytic activity">
    <reaction evidence="2 3">
        <text>GDP-alpha-D-rhamnose + NAD(+) = GDP-4-dehydro-alpha-D-rhamnose + NADH + H(+)</text>
        <dbReference type="Rhea" id="RHEA:13825"/>
        <dbReference type="ChEBI" id="CHEBI:15378"/>
        <dbReference type="ChEBI" id="CHEBI:57540"/>
        <dbReference type="ChEBI" id="CHEBI:57945"/>
        <dbReference type="ChEBI" id="CHEBI:57964"/>
        <dbReference type="ChEBI" id="CHEBI:58224"/>
        <dbReference type="EC" id="1.1.1.281"/>
    </reaction>
</comment>
<comment type="catalytic activity">
    <reaction evidence="2 3">
        <text>GDP-alpha-D-rhamnose + NADP(+) = GDP-4-dehydro-alpha-D-rhamnose + NADPH + H(+)</text>
        <dbReference type="Rhea" id="RHEA:13829"/>
        <dbReference type="ChEBI" id="CHEBI:15378"/>
        <dbReference type="ChEBI" id="CHEBI:57783"/>
        <dbReference type="ChEBI" id="CHEBI:57964"/>
        <dbReference type="ChEBI" id="CHEBI:58224"/>
        <dbReference type="ChEBI" id="CHEBI:58349"/>
        <dbReference type="EC" id="1.1.1.281"/>
    </reaction>
</comment>
<comment type="similarity">
    <text evidence="4">Belongs to the NAD(P)-dependent epimerase/dehydratase family. GDP-6-deoxy-D-mannose reductase subfamily.</text>
</comment>
<comment type="sequence caution" evidence="4">
    <conflict type="erroneous initiation">
        <sequence resource="EMBL-CDS" id="AAC72282"/>
    </conflict>
    <text>Extended N-terminus.</text>
</comment>
<proteinExistence type="evidence at protein level"/>
<reference key="1">
    <citation type="journal article" date="1998" name="Mol. Microbiol.">
        <title>Synthesis of the A-band polysaccharide sugar D-rhamnose requires Rmd and WbpW: identification of multiple AlgA homologues, WbpW and ORF488, in Pseudomonas aeruginosa.</title>
        <authorList>
            <person name="Rocchetta H.L."/>
            <person name="Pacan J.C."/>
            <person name="Lam J.S."/>
        </authorList>
    </citation>
    <scope>NUCLEOTIDE SEQUENCE [GENOMIC DNA]</scope>
    <scope>FUNCTION</scope>
    <scope>CATALYTIC ACTIVITY</scope>
    <source>
        <strain>ATCC 15692 / DSM 22644 / CIP 104116 / JCM 14847 / LMG 12228 / 1C / PRS 101 / PAO1</strain>
    </source>
</reference>
<reference key="2">
    <citation type="journal article" date="2000" name="Nature">
        <title>Complete genome sequence of Pseudomonas aeruginosa PAO1, an opportunistic pathogen.</title>
        <authorList>
            <person name="Stover C.K."/>
            <person name="Pham X.-Q.T."/>
            <person name="Erwin A.L."/>
            <person name="Mizoguchi S.D."/>
            <person name="Warrener P."/>
            <person name="Hickey M.J."/>
            <person name="Brinkman F.S.L."/>
            <person name="Hufnagle W.O."/>
            <person name="Kowalik D.J."/>
            <person name="Lagrou M."/>
            <person name="Garber R.L."/>
            <person name="Goltry L."/>
            <person name="Tolentino E."/>
            <person name="Westbrock-Wadman S."/>
            <person name="Yuan Y."/>
            <person name="Brody L.L."/>
            <person name="Coulter S.N."/>
            <person name="Folger K.R."/>
            <person name="Kas A."/>
            <person name="Larbig K."/>
            <person name="Lim R.M."/>
            <person name="Smith K.A."/>
            <person name="Spencer D.H."/>
            <person name="Wong G.K.-S."/>
            <person name="Wu Z."/>
            <person name="Paulsen I.T."/>
            <person name="Reizer J."/>
            <person name="Saier M.H. Jr."/>
            <person name="Hancock R.E.W."/>
            <person name="Lory S."/>
            <person name="Olson M.V."/>
        </authorList>
    </citation>
    <scope>NUCLEOTIDE SEQUENCE [LARGE SCALE GENOMIC DNA]</scope>
    <source>
        <strain>ATCC 15692 / DSM 22644 / CIP 104116 / JCM 14847 / LMG 12228 / 1C / PRS 101 / PAO1</strain>
    </source>
</reference>
<reference key="3">
    <citation type="journal article" date="2002" name="Eur. J. Biochem.">
        <title>Functional expression of Pseudomonas aeruginosa GDP-4-keto-6-deoxy-D-mannose reductase which synthesizes GDP-rhamnose.</title>
        <authorList>
            <person name="Maeki M."/>
            <person name="Jaervinen N."/>
            <person name="Raebinae J."/>
            <person name="Roos C."/>
            <person name="Maaheimo H."/>
            <person name="Renkonen R."/>
        </authorList>
    </citation>
    <scope>FUNCTION</scope>
    <scope>CATALYTIC ACTIVITY</scope>
</reference>
<dbReference type="EC" id="1.1.1.281"/>
<dbReference type="EMBL" id="AF009955">
    <property type="protein sequence ID" value="AAC72282.2"/>
    <property type="status" value="ALT_INIT"/>
    <property type="molecule type" value="Genomic_DNA"/>
</dbReference>
<dbReference type="EMBL" id="AE004091">
    <property type="protein sequence ID" value="AAG08839.1"/>
    <property type="molecule type" value="Genomic_DNA"/>
</dbReference>
<dbReference type="PIR" id="H82964">
    <property type="entry name" value="H82964"/>
</dbReference>
<dbReference type="RefSeq" id="NP_254141.1">
    <property type="nucleotide sequence ID" value="NC_002516.2"/>
</dbReference>
<dbReference type="RefSeq" id="WP_003114107.1">
    <property type="nucleotide sequence ID" value="NZ_QZGE01000012.1"/>
</dbReference>
<dbReference type="PDB" id="6X3B">
    <property type="method" value="X-ray"/>
    <property type="resolution" value="1.91 A"/>
    <property type="chains" value="A/B/C/D=1-304"/>
</dbReference>
<dbReference type="PDBsum" id="6X3B"/>
<dbReference type="SMR" id="Q9HTB6"/>
<dbReference type="STRING" id="208964.PA5454"/>
<dbReference type="PaxDb" id="208964-PA5454"/>
<dbReference type="GeneID" id="883037"/>
<dbReference type="KEGG" id="pae:PA5454"/>
<dbReference type="PATRIC" id="fig|208964.12.peg.5717"/>
<dbReference type="PseudoCAP" id="PA5454"/>
<dbReference type="HOGENOM" id="CLU_007383_1_7_6"/>
<dbReference type="InParanoid" id="Q9HTB6"/>
<dbReference type="OrthoDB" id="5295702at2"/>
<dbReference type="PhylomeDB" id="Q9HTB6"/>
<dbReference type="BioCyc" id="PAER208964:G1FZ6-5582-MONOMER"/>
<dbReference type="BRENDA" id="1.1.1.281">
    <property type="organism ID" value="5087"/>
</dbReference>
<dbReference type="Proteomes" id="UP000002438">
    <property type="component" value="Chromosome"/>
</dbReference>
<dbReference type="GO" id="GO:0033705">
    <property type="term" value="F:GDP-4-dehydro-6-deoxy-D-mannose reductase activity"/>
    <property type="evidence" value="ECO:0000314"/>
    <property type="project" value="UniProtKB"/>
</dbReference>
<dbReference type="GO" id="GO:0070402">
    <property type="term" value="F:NADPH binding"/>
    <property type="evidence" value="ECO:0000269"/>
    <property type="project" value="PseudoCAP"/>
</dbReference>
<dbReference type="GO" id="GO:0016491">
    <property type="term" value="F:oxidoreductase activity"/>
    <property type="evidence" value="ECO:0000314"/>
    <property type="project" value="UniProtKB"/>
</dbReference>
<dbReference type="GO" id="GO:0019306">
    <property type="term" value="P:GDP-D-rhamnose biosynthetic process"/>
    <property type="evidence" value="ECO:0000269"/>
    <property type="project" value="PseudoCAP"/>
</dbReference>
<dbReference type="GO" id="GO:0009103">
    <property type="term" value="P:lipopolysaccharide biosynthetic process"/>
    <property type="evidence" value="ECO:0000315"/>
    <property type="project" value="PseudoCAP"/>
</dbReference>
<dbReference type="GO" id="GO:0009243">
    <property type="term" value="P:O antigen biosynthetic process"/>
    <property type="evidence" value="ECO:0000314"/>
    <property type="project" value="PseudoCAP"/>
</dbReference>
<dbReference type="Gene3D" id="3.40.50.720">
    <property type="entry name" value="NAD(P)-binding Rossmann-like Domain"/>
    <property type="match status" value="1"/>
</dbReference>
<dbReference type="Gene3D" id="3.90.25.10">
    <property type="entry name" value="UDP-galactose 4-epimerase, domain 1"/>
    <property type="match status" value="1"/>
</dbReference>
<dbReference type="InterPro" id="IPR001509">
    <property type="entry name" value="Epimerase_deHydtase"/>
</dbReference>
<dbReference type="InterPro" id="IPR036291">
    <property type="entry name" value="NAD(P)-bd_dom_sf"/>
</dbReference>
<dbReference type="PANTHER" id="PTHR43000">
    <property type="entry name" value="DTDP-D-GLUCOSE 4,6-DEHYDRATASE-RELATED"/>
    <property type="match status" value="1"/>
</dbReference>
<dbReference type="Pfam" id="PF01370">
    <property type="entry name" value="Epimerase"/>
    <property type="match status" value="1"/>
</dbReference>
<dbReference type="SUPFAM" id="SSF51735">
    <property type="entry name" value="NAD(P)-binding Rossmann-fold domains"/>
    <property type="match status" value="1"/>
</dbReference>
<dbReference type="PROSITE" id="PS00061">
    <property type="entry name" value="ADH_SHORT"/>
    <property type="match status" value="1"/>
</dbReference>
<keyword id="KW-0002">3D-structure</keyword>
<keyword id="KW-0520">NAD</keyword>
<keyword id="KW-0521">NADP</keyword>
<keyword id="KW-0560">Oxidoreductase</keyword>
<keyword id="KW-1185">Reference proteome</keyword>
<organism>
    <name type="scientific">Pseudomonas aeruginosa (strain ATCC 15692 / DSM 22644 / CIP 104116 / JCM 14847 / LMG 12228 / 1C / PRS 101 / PAO1)</name>
    <dbReference type="NCBI Taxonomy" id="208964"/>
    <lineage>
        <taxon>Bacteria</taxon>
        <taxon>Pseudomonadati</taxon>
        <taxon>Pseudomonadota</taxon>
        <taxon>Gammaproteobacteria</taxon>
        <taxon>Pseudomonadales</taxon>
        <taxon>Pseudomonadaceae</taxon>
        <taxon>Pseudomonas</taxon>
    </lineage>
</organism>
<accession>Q9HTB6</accession>
<accession>O87265</accession>